<evidence type="ECO:0000255" key="1">
    <source>
        <dbReference type="HAMAP-Rule" id="MF_01152"/>
    </source>
</evidence>
<reference key="1">
    <citation type="submission" date="2006-03" db="EMBL/GenBank/DDBJ databases">
        <title>Complete genome sequence of Francisella tularensis LVS (Live Vaccine Strain).</title>
        <authorList>
            <person name="Chain P."/>
            <person name="Larimer F."/>
            <person name="Land M."/>
            <person name="Stilwagen S."/>
            <person name="Larsson P."/>
            <person name="Bearden S."/>
            <person name="Chu M."/>
            <person name="Oyston P."/>
            <person name="Forsman M."/>
            <person name="Andersson S."/>
            <person name="Lindler L."/>
            <person name="Titball R."/>
            <person name="Garcia E."/>
        </authorList>
    </citation>
    <scope>NUCLEOTIDE SEQUENCE [LARGE SCALE GENOMIC DNA]</scope>
    <source>
        <strain>LVS</strain>
    </source>
</reference>
<gene>
    <name evidence="1" type="primary">dnaJ</name>
    <name type="ordered locus">FTL_1192</name>
</gene>
<proteinExistence type="inferred from homology"/>
<organism>
    <name type="scientific">Francisella tularensis subsp. holarctica (strain LVS)</name>
    <dbReference type="NCBI Taxonomy" id="376619"/>
    <lineage>
        <taxon>Bacteria</taxon>
        <taxon>Pseudomonadati</taxon>
        <taxon>Pseudomonadota</taxon>
        <taxon>Gammaproteobacteria</taxon>
        <taxon>Thiotrichales</taxon>
        <taxon>Francisellaceae</taxon>
        <taxon>Francisella</taxon>
    </lineage>
</organism>
<sequence length="371" mass="41481">MQQKCYYEILNISKTASGVEIKRAYRKLAMKYHPDRNPGDKEAEIKFKEISEAYEILSDDSKRSRYDQFGHAGVNQQSGFGGTGGFEDIFDTFFGGGTSRGSNRSRASRGSDLEYTLEITLEEAFFGVEKEITIPRMESCDSCDGTGSKSRSKTTCHACHGQGTIRRQQGFFAFEQTCPVCNGTGYSITDPCDACYGNGKVKKQKTLKVKIPEGVDNGDRIRLQGEGDSGSNGAMNGDLYVQIIIKEHKIFERRDINLYCEMPISFTKACLGGDIKVPTLDGEVVLKVVPETQTGKVFRLREKGMKSLRGHRRGDLLCKVVVETPVNLSAEQKELLEKFADSLGEDYQSKHAPKSKTWFDNVKDYAKKFFE</sequence>
<keyword id="KW-0143">Chaperone</keyword>
<keyword id="KW-0963">Cytoplasm</keyword>
<keyword id="KW-0235">DNA replication</keyword>
<keyword id="KW-0479">Metal-binding</keyword>
<keyword id="KW-1185">Reference proteome</keyword>
<keyword id="KW-0677">Repeat</keyword>
<keyword id="KW-0346">Stress response</keyword>
<keyword id="KW-0862">Zinc</keyword>
<keyword id="KW-0863">Zinc-finger</keyword>
<dbReference type="EMBL" id="AM233362">
    <property type="protein sequence ID" value="CAJ79631.1"/>
    <property type="molecule type" value="Genomic_DNA"/>
</dbReference>
<dbReference type="RefSeq" id="WP_011457462.1">
    <property type="nucleotide sequence ID" value="NZ_CP009694.1"/>
</dbReference>
<dbReference type="SMR" id="Q2A327"/>
<dbReference type="KEGG" id="ftl:FTL_1192"/>
<dbReference type="Proteomes" id="UP000001944">
    <property type="component" value="Chromosome"/>
</dbReference>
<dbReference type="GO" id="GO:0005737">
    <property type="term" value="C:cytoplasm"/>
    <property type="evidence" value="ECO:0007669"/>
    <property type="project" value="UniProtKB-SubCell"/>
</dbReference>
<dbReference type="GO" id="GO:0005524">
    <property type="term" value="F:ATP binding"/>
    <property type="evidence" value="ECO:0007669"/>
    <property type="project" value="InterPro"/>
</dbReference>
<dbReference type="GO" id="GO:0031072">
    <property type="term" value="F:heat shock protein binding"/>
    <property type="evidence" value="ECO:0007669"/>
    <property type="project" value="InterPro"/>
</dbReference>
<dbReference type="GO" id="GO:0051082">
    <property type="term" value="F:unfolded protein binding"/>
    <property type="evidence" value="ECO:0007669"/>
    <property type="project" value="UniProtKB-UniRule"/>
</dbReference>
<dbReference type="GO" id="GO:0008270">
    <property type="term" value="F:zinc ion binding"/>
    <property type="evidence" value="ECO:0007669"/>
    <property type="project" value="UniProtKB-UniRule"/>
</dbReference>
<dbReference type="GO" id="GO:0051085">
    <property type="term" value="P:chaperone cofactor-dependent protein refolding"/>
    <property type="evidence" value="ECO:0007669"/>
    <property type="project" value="TreeGrafter"/>
</dbReference>
<dbReference type="GO" id="GO:0006260">
    <property type="term" value="P:DNA replication"/>
    <property type="evidence" value="ECO:0007669"/>
    <property type="project" value="UniProtKB-KW"/>
</dbReference>
<dbReference type="GO" id="GO:0042026">
    <property type="term" value="P:protein refolding"/>
    <property type="evidence" value="ECO:0007669"/>
    <property type="project" value="TreeGrafter"/>
</dbReference>
<dbReference type="GO" id="GO:0009408">
    <property type="term" value="P:response to heat"/>
    <property type="evidence" value="ECO:0007669"/>
    <property type="project" value="InterPro"/>
</dbReference>
<dbReference type="CDD" id="cd06257">
    <property type="entry name" value="DnaJ"/>
    <property type="match status" value="1"/>
</dbReference>
<dbReference type="CDD" id="cd10747">
    <property type="entry name" value="DnaJ_C"/>
    <property type="match status" value="1"/>
</dbReference>
<dbReference type="CDD" id="cd10719">
    <property type="entry name" value="DnaJ_zf"/>
    <property type="match status" value="1"/>
</dbReference>
<dbReference type="FunFam" id="1.10.287.110:FF:000034">
    <property type="entry name" value="Chaperone protein DnaJ"/>
    <property type="match status" value="1"/>
</dbReference>
<dbReference type="FunFam" id="2.10.230.10:FF:000002">
    <property type="entry name" value="Molecular chaperone DnaJ"/>
    <property type="match status" value="1"/>
</dbReference>
<dbReference type="FunFam" id="2.60.260.20:FF:000004">
    <property type="entry name" value="Molecular chaperone DnaJ"/>
    <property type="match status" value="1"/>
</dbReference>
<dbReference type="Gene3D" id="1.10.287.110">
    <property type="entry name" value="DnaJ domain"/>
    <property type="match status" value="1"/>
</dbReference>
<dbReference type="Gene3D" id="2.10.230.10">
    <property type="entry name" value="Heat shock protein DnaJ, cysteine-rich domain"/>
    <property type="match status" value="1"/>
</dbReference>
<dbReference type="Gene3D" id="2.60.260.20">
    <property type="entry name" value="Urease metallochaperone UreE, N-terminal domain"/>
    <property type="match status" value="2"/>
</dbReference>
<dbReference type="HAMAP" id="MF_01152">
    <property type="entry name" value="DnaJ"/>
    <property type="match status" value="1"/>
</dbReference>
<dbReference type="InterPro" id="IPR012724">
    <property type="entry name" value="DnaJ"/>
</dbReference>
<dbReference type="InterPro" id="IPR002939">
    <property type="entry name" value="DnaJ_C"/>
</dbReference>
<dbReference type="InterPro" id="IPR001623">
    <property type="entry name" value="DnaJ_domain"/>
</dbReference>
<dbReference type="InterPro" id="IPR018253">
    <property type="entry name" value="DnaJ_domain_CS"/>
</dbReference>
<dbReference type="InterPro" id="IPR008971">
    <property type="entry name" value="HSP40/DnaJ_pept-bd"/>
</dbReference>
<dbReference type="InterPro" id="IPR001305">
    <property type="entry name" value="HSP_DnaJ_Cys-rich_dom"/>
</dbReference>
<dbReference type="InterPro" id="IPR036410">
    <property type="entry name" value="HSP_DnaJ_Cys-rich_dom_sf"/>
</dbReference>
<dbReference type="InterPro" id="IPR036869">
    <property type="entry name" value="J_dom_sf"/>
</dbReference>
<dbReference type="NCBIfam" id="TIGR02349">
    <property type="entry name" value="DnaJ_bact"/>
    <property type="match status" value="1"/>
</dbReference>
<dbReference type="NCBIfam" id="NF008035">
    <property type="entry name" value="PRK10767.1"/>
    <property type="match status" value="1"/>
</dbReference>
<dbReference type="PANTHER" id="PTHR43096:SF48">
    <property type="entry name" value="CHAPERONE PROTEIN DNAJ"/>
    <property type="match status" value="1"/>
</dbReference>
<dbReference type="PANTHER" id="PTHR43096">
    <property type="entry name" value="DNAJ HOMOLOG 1, MITOCHONDRIAL-RELATED"/>
    <property type="match status" value="1"/>
</dbReference>
<dbReference type="Pfam" id="PF00226">
    <property type="entry name" value="DnaJ"/>
    <property type="match status" value="1"/>
</dbReference>
<dbReference type="Pfam" id="PF01556">
    <property type="entry name" value="DnaJ_C"/>
    <property type="match status" value="1"/>
</dbReference>
<dbReference type="Pfam" id="PF00684">
    <property type="entry name" value="DnaJ_CXXCXGXG"/>
    <property type="match status" value="1"/>
</dbReference>
<dbReference type="PRINTS" id="PR00625">
    <property type="entry name" value="JDOMAIN"/>
</dbReference>
<dbReference type="SMART" id="SM00271">
    <property type="entry name" value="DnaJ"/>
    <property type="match status" value="1"/>
</dbReference>
<dbReference type="SUPFAM" id="SSF46565">
    <property type="entry name" value="Chaperone J-domain"/>
    <property type="match status" value="1"/>
</dbReference>
<dbReference type="SUPFAM" id="SSF57938">
    <property type="entry name" value="DnaJ/Hsp40 cysteine-rich domain"/>
    <property type="match status" value="1"/>
</dbReference>
<dbReference type="SUPFAM" id="SSF49493">
    <property type="entry name" value="HSP40/DnaJ peptide-binding domain"/>
    <property type="match status" value="2"/>
</dbReference>
<dbReference type="PROSITE" id="PS00636">
    <property type="entry name" value="DNAJ_1"/>
    <property type="match status" value="1"/>
</dbReference>
<dbReference type="PROSITE" id="PS50076">
    <property type="entry name" value="DNAJ_2"/>
    <property type="match status" value="1"/>
</dbReference>
<dbReference type="PROSITE" id="PS51188">
    <property type="entry name" value="ZF_CR"/>
    <property type="match status" value="1"/>
</dbReference>
<feature type="chain" id="PRO_1000085197" description="Chaperone protein DnaJ">
    <location>
        <begin position="1"/>
        <end position="371"/>
    </location>
</feature>
<feature type="domain" description="J" evidence="1">
    <location>
        <begin position="5"/>
        <end position="70"/>
    </location>
</feature>
<feature type="repeat" description="CXXCXGXG motif">
    <location>
        <begin position="140"/>
        <end position="147"/>
    </location>
</feature>
<feature type="repeat" description="CXXCXGXG motif">
    <location>
        <begin position="156"/>
        <end position="163"/>
    </location>
</feature>
<feature type="repeat" description="CXXCXGXG motif">
    <location>
        <begin position="178"/>
        <end position="185"/>
    </location>
</feature>
<feature type="repeat" description="CXXCXGXG motif">
    <location>
        <begin position="192"/>
        <end position="199"/>
    </location>
</feature>
<feature type="zinc finger region" description="CR-type" evidence="1">
    <location>
        <begin position="127"/>
        <end position="204"/>
    </location>
</feature>
<feature type="binding site" evidence="1">
    <location>
        <position position="140"/>
    </location>
    <ligand>
        <name>Zn(2+)</name>
        <dbReference type="ChEBI" id="CHEBI:29105"/>
        <label>1</label>
    </ligand>
</feature>
<feature type="binding site" evidence="1">
    <location>
        <position position="143"/>
    </location>
    <ligand>
        <name>Zn(2+)</name>
        <dbReference type="ChEBI" id="CHEBI:29105"/>
        <label>1</label>
    </ligand>
</feature>
<feature type="binding site" evidence="1">
    <location>
        <position position="156"/>
    </location>
    <ligand>
        <name>Zn(2+)</name>
        <dbReference type="ChEBI" id="CHEBI:29105"/>
        <label>2</label>
    </ligand>
</feature>
<feature type="binding site" evidence="1">
    <location>
        <position position="159"/>
    </location>
    <ligand>
        <name>Zn(2+)</name>
        <dbReference type="ChEBI" id="CHEBI:29105"/>
        <label>2</label>
    </ligand>
</feature>
<feature type="binding site" evidence="1">
    <location>
        <position position="178"/>
    </location>
    <ligand>
        <name>Zn(2+)</name>
        <dbReference type="ChEBI" id="CHEBI:29105"/>
        <label>2</label>
    </ligand>
</feature>
<feature type="binding site" evidence="1">
    <location>
        <position position="181"/>
    </location>
    <ligand>
        <name>Zn(2+)</name>
        <dbReference type="ChEBI" id="CHEBI:29105"/>
        <label>2</label>
    </ligand>
</feature>
<feature type="binding site" evidence="1">
    <location>
        <position position="192"/>
    </location>
    <ligand>
        <name>Zn(2+)</name>
        <dbReference type="ChEBI" id="CHEBI:29105"/>
        <label>1</label>
    </ligand>
</feature>
<feature type="binding site" evidence="1">
    <location>
        <position position="195"/>
    </location>
    <ligand>
        <name>Zn(2+)</name>
        <dbReference type="ChEBI" id="CHEBI:29105"/>
        <label>1</label>
    </ligand>
</feature>
<protein>
    <recommendedName>
        <fullName evidence="1">Chaperone protein DnaJ</fullName>
    </recommendedName>
</protein>
<name>DNAJ_FRATH</name>
<comment type="function">
    <text evidence="1">Participates actively in the response to hyperosmotic and heat shock by preventing the aggregation of stress-denatured proteins and by disaggregating proteins, also in an autonomous, DnaK-independent fashion. Unfolded proteins bind initially to DnaJ; upon interaction with the DnaJ-bound protein, DnaK hydrolyzes its bound ATP, resulting in the formation of a stable complex. GrpE releases ADP from DnaK; ATP binding to DnaK triggers the release of the substrate protein, thus completing the reaction cycle. Several rounds of ATP-dependent interactions between DnaJ, DnaK and GrpE are required for fully efficient folding. Also involved, together with DnaK and GrpE, in the DNA replication of plasmids through activation of initiation proteins.</text>
</comment>
<comment type="cofactor">
    <cofactor evidence="1">
        <name>Zn(2+)</name>
        <dbReference type="ChEBI" id="CHEBI:29105"/>
    </cofactor>
    <text evidence="1">Binds 2 Zn(2+) ions per monomer.</text>
</comment>
<comment type="subunit">
    <text evidence="1">Homodimer.</text>
</comment>
<comment type="subcellular location">
    <subcellularLocation>
        <location evidence="1">Cytoplasm</location>
    </subcellularLocation>
</comment>
<comment type="domain">
    <text evidence="1">The J domain is necessary and sufficient to stimulate DnaK ATPase activity. Zinc center 1 plays an important role in the autonomous, DnaK-independent chaperone activity of DnaJ. Zinc center 2 is essential for interaction with DnaK and for DnaJ activity.</text>
</comment>
<comment type="similarity">
    <text evidence="1">Belongs to the DnaJ family.</text>
</comment>
<accession>Q2A327</accession>